<keyword id="KW-0436">Ligase</keyword>
<keyword id="KW-0496">Mitochondrion</keyword>
<keyword id="KW-0547">Nucleotide-binding</keyword>
<keyword id="KW-1185">Reference proteome</keyword>
<keyword id="KW-0809">Transit peptide</keyword>
<keyword id="KW-0816">Tricarboxylic acid cycle</keyword>
<reference key="1">
    <citation type="journal article" date="2002" name="Nature">
        <title>The genome sequence of Schizosaccharomyces pombe.</title>
        <authorList>
            <person name="Wood V."/>
            <person name="Gwilliam R."/>
            <person name="Rajandream M.A."/>
            <person name="Lyne M.H."/>
            <person name="Lyne R."/>
            <person name="Stewart A."/>
            <person name="Sgouros J.G."/>
            <person name="Peat N."/>
            <person name="Hayles J."/>
            <person name="Baker S.G."/>
            <person name="Basham D."/>
            <person name="Bowman S."/>
            <person name="Brooks K."/>
            <person name="Brown D."/>
            <person name="Brown S."/>
            <person name="Chillingworth T."/>
            <person name="Churcher C.M."/>
            <person name="Collins M."/>
            <person name="Connor R."/>
            <person name="Cronin A."/>
            <person name="Davis P."/>
            <person name="Feltwell T."/>
            <person name="Fraser A."/>
            <person name="Gentles S."/>
            <person name="Goble A."/>
            <person name="Hamlin N."/>
            <person name="Harris D.E."/>
            <person name="Hidalgo J."/>
            <person name="Hodgson G."/>
            <person name="Holroyd S."/>
            <person name="Hornsby T."/>
            <person name="Howarth S."/>
            <person name="Huckle E.J."/>
            <person name="Hunt S."/>
            <person name="Jagels K."/>
            <person name="James K.D."/>
            <person name="Jones L."/>
            <person name="Jones M."/>
            <person name="Leather S."/>
            <person name="McDonald S."/>
            <person name="McLean J."/>
            <person name="Mooney P."/>
            <person name="Moule S."/>
            <person name="Mungall K.L."/>
            <person name="Murphy L.D."/>
            <person name="Niblett D."/>
            <person name="Odell C."/>
            <person name="Oliver K."/>
            <person name="O'Neil S."/>
            <person name="Pearson D."/>
            <person name="Quail M.A."/>
            <person name="Rabbinowitsch E."/>
            <person name="Rutherford K.M."/>
            <person name="Rutter S."/>
            <person name="Saunders D."/>
            <person name="Seeger K."/>
            <person name="Sharp S."/>
            <person name="Skelton J."/>
            <person name="Simmonds M.N."/>
            <person name="Squares R."/>
            <person name="Squares S."/>
            <person name="Stevens K."/>
            <person name="Taylor K."/>
            <person name="Taylor R.G."/>
            <person name="Tivey A."/>
            <person name="Walsh S.V."/>
            <person name="Warren T."/>
            <person name="Whitehead S."/>
            <person name="Woodward J.R."/>
            <person name="Volckaert G."/>
            <person name="Aert R."/>
            <person name="Robben J."/>
            <person name="Grymonprez B."/>
            <person name="Weltjens I."/>
            <person name="Vanstreels E."/>
            <person name="Rieger M."/>
            <person name="Schaefer M."/>
            <person name="Mueller-Auer S."/>
            <person name="Gabel C."/>
            <person name="Fuchs M."/>
            <person name="Duesterhoeft A."/>
            <person name="Fritzc C."/>
            <person name="Holzer E."/>
            <person name="Moestl D."/>
            <person name="Hilbert H."/>
            <person name="Borzym K."/>
            <person name="Langer I."/>
            <person name="Beck A."/>
            <person name="Lehrach H."/>
            <person name="Reinhardt R."/>
            <person name="Pohl T.M."/>
            <person name="Eger P."/>
            <person name="Zimmermann W."/>
            <person name="Wedler H."/>
            <person name="Wambutt R."/>
            <person name="Purnelle B."/>
            <person name="Goffeau A."/>
            <person name="Cadieu E."/>
            <person name="Dreano S."/>
            <person name="Gloux S."/>
            <person name="Lelaure V."/>
            <person name="Mottier S."/>
            <person name="Galibert F."/>
            <person name="Aves S.J."/>
            <person name="Xiang Z."/>
            <person name="Hunt C."/>
            <person name="Moore K."/>
            <person name="Hurst S.M."/>
            <person name="Lucas M."/>
            <person name="Rochet M."/>
            <person name="Gaillardin C."/>
            <person name="Tallada V.A."/>
            <person name="Garzon A."/>
            <person name="Thode G."/>
            <person name="Daga R.R."/>
            <person name="Cruzado L."/>
            <person name="Jimenez J."/>
            <person name="Sanchez M."/>
            <person name="del Rey F."/>
            <person name="Benito J."/>
            <person name="Dominguez A."/>
            <person name="Revuelta J.L."/>
            <person name="Moreno S."/>
            <person name="Armstrong J."/>
            <person name="Forsburg S.L."/>
            <person name="Cerutti L."/>
            <person name="Lowe T."/>
            <person name="McCombie W.R."/>
            <person name="Paulsen I."/>
            <person name="Potashkin J."/>
            <person name="Shpakovski G.V."/>
            <person name="Ussery D."/>
            <person name="Barrell B.G."/>
            <person name="Nurse P."/>
        </authorList>
    </citation>
    <scope>NUCLEOTIDE SEQUENCE [LARGE SCALE GENOMIC DNA]</scope>
    <source>
        <strain>972 / ATCC 24843</strain>
    </source>
</reference>
<reference key="2">
    <citation type="journal article" date="2006" name="Nat. Biotechnol.">
        <title>ORFeome cloning and global analysis of protein localization in the fission yeast Schizosaccharomyces pombe.</title>
        <authorList>
            <person name="Matsuyama A."/>
            <person name="Arai R."/>
            <person name="Yashiroda Y."/>
            <person name="Shirai A."/>
            <person name="Kamata A."/>
            <person name="Sekido S."/>
            <person name="Kobayashi Y."/>
            <person name="Hashimoto A."/>
            <person name="Hamamoto M."/>
            <person name="Hiraoka Y."/>
            <person name="Horinouchi S."/>
            <person name="Yoshida M."/>
        </authorList>
    </citation>
    <scope>SUBCELLULAR LOCATION [LARGE SCALE ANALYSIS]</scope>
</reference>
<proteinExistence type="inferred from homology"/>
<gene>
    <name evidence="3" type="ORF">SPAC16E8.17c</name>
</gene>
<feature type="transit peptide" description="Mitochondrion" evidence="1">
    <location>
        <begin position="1"/>
        <end position="22"/>
    </location>
</feature>
<feature type="chain" id="PRO_0000033350" description="Succinate--CoA ligase [ADP-forming] subunit alpha, mitochondrial" evidence="1">
    <location>
        <begin position="23"/>
        <end position="331"/>
    </location>
</feature>
<feature type="active site" description="Tele-phosphohistidine intermediate" evidence="1">
    <location>
        <position position="285"/>
    </location>
</feature>
<feature type="binding site" evidence="1">
    <location>
        <begin position="49"/>
        <end position="52"/>
    </location>
    <ligand>
        <name>CoA</name>
        <dbReference type="ChEBI" id="CHEBI:57287"/>
    </ligand>
</feature>
<feature type="binding site" evidence="1">
    <location>
        <position position="75"/>
    </location>
    <ligand>
        <name>CoA</name>
        <dbReference type="ChEBI" id="CHEBI:57287"/>
    </ligand>
</feature>
<feature type="binding site" evidence="1">
    <location>
        <begin position="128"/>
        <end position="130"/>
    </location>
    <ligand>
        <name>CoA</name>
        <dbReference type="ChEBI" id="CHEBI:57287"/>
    </ligand>
</feature>
<feature type="binding site" evidence="1">
    <location>
        <position position="192"/>
    </location>
    <ligand>
        <name>substrate</name>
        <note>ligand shared with subunit beta</note>
    </ligand>
</feature>
<evidence type="ECO:0000255" key="1">
    <source>
        <dbReference type="HAMAP-Rule" id="MF_03222"/>
    </source>
</evidence>
<evidence type="ECO:0000269" key="2">
    <source>
    </source>
</evidence>
<evidence type="ECO:0000312" key="3">
    <source>
        <dbReference type="PomBase" id="SPAC16E8.17c"/>
    </source>
</evidence>
<accession>O13750</accession>
<sequence length="331" mass="34706">MFKTQTTLLTSLRRFSSSSQLKNSKSLYEQTIPNLMINSDTKVIFQGFTGKQGTFHAQHAMDYGTKVVGGTNPKKAGTTHLGKPVFGTIEEAMKETKADASAVFVPPPLAAGAIEEAIAAEVPLIVAITEGIPQHDMLRVSDILKTQSKSRLVGPNCPGIIRPGQCKIGIMPSHIHKPGCIGIVSRSGTLTYEAVNQTTQTDLGQSLVIGIGGDPFPGTNFIDALKLFLDDPNTQGIILIGEIGGSAEEDAAEFIRAANASRSTPKPVVSFIAGATAPKGRRMGHAGAIVAGGKGTAAAKFEALEAAGVRISRSPATLGSLIVEELNKLKH</sequence>
<comment type="function">
    <text evidence="1">Succinyl-CoA synthetase functions in the citric acid cycle (TCA), coupling the hydrolysis of succinyl-CoA to the synthesis of ATP and thus represents the only step of substrate-level phosphorylation in the TCA. The alpha subunit of the enzyme binds the substrates coenzyme A and phosphate, while succinate binding and nucleotide specificity is provided by the beta subunit.</text>
</comment>
<comment type="catalytic activity">
    <reaction evidence="1">
        <text>succinate + ATP + CoA = succinyl-CoA + ADP + phosphate</text>
        <dbReference type="Rhea" id="RHEA:17661"/>
        <dbReference type="ChEBI" id="CHEBI:30031"/>
        <dbReference type="ChEBI" id="CHEBI:30616"/>
        <dbReference type="ChEBI" id="CHEBI:43474"/>
        <dbReference type="ChEBI" id="CHEBI:57287"/>
        <dbReference type="ChEBI" id="CHEBI:57292"/>
        <dbReference type="ChEBI" id="CHEBI:456216"/>
        <dbReference type="EC" id="6.2.1.5"/>
    </reaction>
</comment>
<comment type="pathway">
    <text evidence="1">Carbohydrate metabolism; tricarboxylic acid cycle; succinate from succinyl-CoA (ligase route): step 1/1.</text>
</comment>
<comment type="subunit">
    <text evidence="1">Heterodimer of an alpha and a beta subunit.</text>
</comment>
<comment type="subcellular location">
    <subcellularLocation>
        <location evidence="1 2">Mitochondrion</location>
    </subcellularLocation>
</comment>
<comment type="similarity">
    <text evidence="1">Belongs to the succinate/malate CoA ligase alpha subunit family.</text>
</comment>
<protein>
    <recommendedName>
        <fullName evidence="1">Succinate--CoA ligase [ADP-forming] subunit alpha, mitochondrial</fullName>
        <ecNumber evidence="1">6.2.1.5</ecNumber>
    </recommendedName>
    <alternativeName>
        <fullName evidence="1">Succinyl-CoA synthetase subunit alpha</fullName>
        <shortName evidence="1">SCS-alpha</shortName>
    </alternativeName>
</protein>
<name>SUCA_SCHPO</name>
<organism>
    <name type="scientific">Schizosaccharomyces pombe (strain 972 / ATCC 24843)</name>
    <name type="common">Fission yeast</name>
    <dbReference type="NCBI Taxonomy" id="284812"/>
    <lineage>
        <taxon>Eukaryota</taxon>
        <taxon>Fungi</taxon>
        <taxon>Dikarya</taxon>
        <taxon>Ascomycota</taxon>
        <taxon>Taphrinomycotina</taxon>
        <taxon>Schizosaccharomycetes</taxon>
        <taxon>Schizosaccharomycetales</taxon>
        <taxon>Schizosaccharomycetaceae</taxon>
        <taxon>Schizosaccharomyces</taxon>
    </lineage>
</organism>
<dbReference type="EC" id="6.2.1.5" evidence="1"/>
<dbReference type="EMBL" id="CU329670">
    <property type="protein sequence ID" value="CAB11045.1"/>
    <property type="molecule type" value="Genomic_DNA"/>
</dbReference>
<dbReference type="PIR" id="T37797">
    <property type="entry name" value="T37797"/>
</dbReference>
<dbReference type="RefSeq" id="NP_594230.1">
    <property type="nucleotide sequence ID" value="NM_001019653.2"/>
</dbReference>
<dbReference type="SMR" id="O13750"/>
<dbReference type="BioGRID" id="278807">
    <property type="interactions" value="4"/>
</dbReference>
<dbReference type="FunCoup" id="O13750">
    <property type="interactions" value="423"/>
</dbReference>
<dbReference type="STRING" id="284812.O13750"/>
<dbReference type="iPTMnet" id="O13750"/>
<dbReference type="PaxDb" id="4896-SPAC16E8.17c.1"/>
<dbReference type="EnsemblFungi" id="SPAC16E8.17c.1">
    <property type="protein sequence ID" value="SPAC16E8.17c.1:pep"/>
    <property type="gene ID" value="SPAC16E8.17c"/>
</dbReference>
<dbReference type="KEGG" id="spo:2542341"/>
<dbReference type="PomBase" id="SPAC16E8.17c"/>
<dbReference type="VEuPathDB" id="FungiDB:SPAC16E8.17c"/>
<dbReference type="eggNOG" id="KOG1255">
    <property type="taxonomic scope" value="Eukaryota"/>
</dbReference>
<dbReference type="HOGENOM" id="CLU_052104_1_0_1"/>
<dbReference type="InParanoid" id="O13750"/>
<dbReference type="OMA" id="VIICITE"/>
<dbReference type="PhylomeDB" id="O13750"/>
<dbReference type="Reactome" id="R-SPO-71403">
    <property type="pathway name" value="Citric acid cycle (TCA cycle)"/>
</dbReference>
<dbReference type="UniPathway" id="UPA00223">
    <property type="reaction ID" value="UER00999"/>
</dbReference>
<dbReference type="PRO" id="PR:O13750"/>
<dbReference type="Proteomes" id="UP000002485">
    <property type="component" value="Chromosome I"/>
</dbReference>
<dbReference type="GO" id="GO:0005739">
    <property type="term" value="C:mitochondrion"/>
    <property type="evidence" value="ECO:0007005"/>
    <property type="project" value="PomBase"/>
</dbReference>
<dbReference type="GO" id="GO:0009361">
    <property type="term" value="C:succinate-CoA ligase complex (ADP-forming)"/>
    <property type="evidence" value="ECO:0000318"/>
    <property type="project" value="GO_Central"/>
</dbReference>
<dbReference type="GO" id="GO:0000166">
    <property type="term" value="F:nucleotide binding"/>
    <property type="evidence" value="ECO:0007669"/>
    <property type="project" value="UniProtKB-KW"/>
</dbReference>
<dbReference type="GO" id="GO:0004775">
    <property type="term" value="F:succinate-CoA ligase (ADP-forming) activity"/>
    <property type="evidence" value="ECO:0000318"/>
    <property type="project" value="GO_Central"/>
</dbReference>
<dbReference type="GO" id="GO:0004776">
    <property type="term" value="F:succinate-CoA ligase (GDP-forming) activity"/>
    <property type="evidence" value="ECO:0000318"/>
    <property type="project" value="GO_Central"/>
</dbReference>
<dbReference type="GO" id="GO:0006104">
    <property type="term" value="P:succinyl-CoA metabolic process"/>
    <property type="evidence" value="ECO:0000250"/>
    <property type="project" value="PomBase"/>
</dbReference>
<dbReference type="GO" id="GO:0006099">
    <property type="term" value="P:tricarboxylic acid cycle"/>
    <property type="evidence" value="ECO:0000269"/>
    <property type="project" value="PomBase"/>
</dbReference>
<dbReference type="FunFam" id="3.40.50.720:FF:000002">
    <property type="entry name" value="Succinate--CoA ligase [ADP-forming] subunit alpha"/>
    <property type="match status" value="1"/>
</dbReference>
<dbReference type="FunFam" id="3.40.50.261:FF:000005">
    <property type="entry name" value="Succinate--CoA ligase [ADP-forming] subunit alpha, mitochondrial"/>
    <property type="match status" value="1"/>
</dbReference>
<dbReference type="Gene3D" id="3.40.50.720">
    <property type="entry name" value="NAD(P)-binding Rossmann-like Domain"/>
    <property type="match status" value="1"/>
</dbReference>
<dbReference type="Gene3D" id="3.40.50.261">
    <property type="entry name" value="Succinyl-CoA synthetase domains"/>
    <property type="match status" value="1"/>
</dbReference>
<dbReference type="HAMAP" id="MF_01988">
    <property type="entry name" value="Succ_CoA_alpha"/>
    <property type="match status" value="1"/>
</dbReference>
<dbReference type="InterPro" id="IPR017440">
    <property type="entry name" value="Cit_synth/succinyl-CoA_lig_AS"/>
</dbReference>
<dbReference type="InterPro" id="IPR033847">
    <property type="entry name" value="Citrt_syn/SCS-alpha_CS"/>
</dbReference>
<dbReference type="InterPro" id="IPR003781">
    <property type="entry name" value="CoA-bd"/>
</dbReference>
<dbReference type="InterPro" id="IPR005810">
    <property type="entry name" value="CoA_lig_alpha"/>
</dbReference>
<dbReference type="InterPro" id="IPR036291">
    <property type="entry name" value="NAD(P)-bd_dom_sf"/>
</dbReference>
<dbReference type="InterPro" id="IPR005811">
    <property type="entry name" value="SUCC_ACL_C"/>
</dbReference>
<dbReference type="InterPro" id="IPR016102">
    <property type="entry name" value="Succinyl-CoA_synth-like"/>
</dbReference>
<dbReference type="NCBIfam" id="NF004230">
    <property type="entry name" value="PRK05678.1"/>
    <property type="match status" value="1"/>
</dbReference>
<dbReference type="NCBIfam" id="TIGR01019">
    <property type="entry name" value="sucCoAalpha"/>
    <property type="match status" value="1"/>
</dbReference>
<dbReference type="PANTHER" id="PTHR11117:SF2">
    <property type="entry name" value="SUCCINATE--COA LIGASE [ADP_GDP-FORMING] SUBUNIT ALPHA, MITOCHONDRIAL"/>
    <property type="match status" value="1"/>
</dbReference>
<dbReference type="PANTHER" id="PTHR11117">
    <property type="entry name" value="SUCCINYL-COA LIGASE SUBUNIT ALPHA"/>
    <property type="match status" value="1"/>
</dbReference>
<dbReference type="Pfam" id="PF02629">
    <property type="entry name" value="CoA_binding"/>
    <property type="match status" value="1"/>
</dbReference>
<dbReference type="Pfam" id="PF00549">
    <property type="entry name" value="Ligase_CoA"/>
    <property type="match status" value="1"/>
</dbReference>
<dbReference type="PIRSF" id="PIRSF001553">
    <property type="entry name" value="SucCS_alpha"/>
    <property type="match status" value="1"/>
</dbReference>
<dbReference type="PRINTS" id="PR01798">
    <property type="entry name" value="SCOASYNTHASE"/>
</dbReference>
<dbReference type="SMART" id="SM00881">
    <property type="entry name" value="CoA_binding"/>
    <property type="match status" value="1"/>
</dbReference>
<dbReference type="SUPFAM" id="SSF51735">
    <property type="entry name" value="NAD(P)-binding Rossmann-fold domains"/>
    <property type="match status" value="1"/>
</dbReference>
<dbReference type="SUPFAM" id="SSF52210">
    <property type="entry name" value="Succinyl-CoA synthetase domains"/>
    <property type="match status" value="1"/>
</dbReference>
<dbReference type="PROSITE" id="PS01216">
    <property type="entry name" value="SUCCINYL_COA_LIG_1"/>
    <property type="match status" value="1"/>
</dbReference>
<dbReference type="PROSITE" id="PS00399">
    <property type="entry name" value="SUCCINYL_COA_LIG_2"/>
    <property type="match status" value="1"/>
</dbReference>